<evidence type="ECO:0000250" key="1">
    <source>
        <dbReference type="UniProtKB" id="O95453"/>
    </source>
</evidence>
<evidence type="ECO:0000255" key="2">
    <source>
        <dbReference type="HAMAP-Rule" id="MF_03182"/>
    </source>
</evidence>
<evidence type="ECO:0000256" key="3">
    <source>
        <dbReference type="SAM" id="MobiDB-lite"/>
    </source>
</evidence>
<evidence type="ECO:0000269" key="4">
    <source>
    </source>
</evidence>
<evidence type="ECO:0000305" key="5">
    <source>
    </source>
</evidence>
<evidence type="ECO:0007744" key="6">
    <source>
        <dbReference type="PDB" id="4CYJ"/>
    </source>
</evidence>
<evidence type="ECO:0007744" key="7">
    <source>
        <dbReference type="PDB" id="4D0K"/>
    </source>
</evidence>
<evidence type="ECO:0007829" key="8">
    <source>
        <dbReference type="PDB" id="4CYJ"/>
    </source>
</evidence>
<evidence type="ECO:0007829" key="9">
    <source>
        <dbReference type="PDB" id="4D0K"/>
    </source>
</evidence>
<proteinExistence type="evidence at protein level"/>
<protein>
    <recommendedName>
        <fullName evidence="2">PAN2-PAN3 deadenylation complex catalytic subunit PAN2</fullName>
        <ecNumber evidence="2">3.1.13.4</ecNumber>
    </recommendedName>
    <alternativeName>
        <fullName evidence="2">PAB1P-dependent poly(A)-specific ribonuclease</fullName>
    </alternativeName>
    <alternativeName>
        <fullName evidence="2">Poly(A)-nuclease deadenylation complex subunit 2</fullName>
        <shortName evidence="2">PAN deadenylation complex subunit 2</shortName>
    </alternativeName>
</protein>
<feature type="chain" id="PRO_0000441674" description="PAN2-PAN3 deadenylation complex catalytic subunit PAN2">
    <location>
        <begin position="1"/>
        <end position="1170"/>
    </location>
</feature>
<feature type="repeat" description="WD 1" evidence="2">
    <location>
        <begin position="104"/>
        <end position="144"/>
    </location>
</feature>
<feature type="repeat" description="WD 2" evidence="2">
    <location>
        <begin position="280"/>
        <end position="319"/>
    </location>
</feature>
<feature type="domain" description="USP" evidence="2 5">
    <location>
        <begin position="459"/>
        <end position="846"/>
    </location>
</feature>
<feature type="domain" description="Exonuclease" evidence="2">
    <location>
        <begin position="894"/>
        <end position="1067"/>
    </location>
</feature>
<feature type="region of interest" description="Linker" evidence="2 5">
    <location>
        <begin position="319"/>
        <end position="458"/>
    </location>
</feature>
<feature type="region of interest" description="Disordered" evidence="3">
    <location>
        <begin position="399"/>
        <end position="459"/>
    </location>
</feature>
<feature type="region of interest" description="Disordered" evidence="3">
    <location>
        <begin position="1094"/>
        <end position="1170"/>
    </location>
</feature>
<feature type="compositionally biased region" description="Acidic residues" evidence="3">
    <location>
        <begin position="443"/>
        <end position="452"/>
    </location>
</feature>
<feature type="compositionally biased region" description="Basic and acidic residues" evidence="3">
    <location>
        <begin position="1098"/>
        <end position="1108"/>
    </location>
</feature>
<feature type="compositionally biased region" description="Polar residues" evidence="3">
    <location>
        <begin position="1109"/>
        <end position="1119"/>
    </location>
</feature>
<feature type="binding site" evidence="1 2">
    <location>
        <position position="897"/>
    </location>
    <ligand>
        <name>a divalent metal cation</name>
        <dbReference type="ChEBI" id="CHEBI:60240"/>
        <note>catalytic</note>
    </ligand>
</feature>
<feature type="binding site" evidence="1 2">
    <location>
        <position position="899"/>
    </location>
    <ligand>
        <name>a divalent metal cation</name>
        <dbReference type="ChEBI" id="CHEBI:60240"/>
        <note>catalytic</note>
    </ligand>
</feature>
<feature type="binding site" evidence="1 2">
    <location>
        <position position="1006"/>
    </location>
    <ligand>
        <name>a divalent metal cation</name>
        <dbReference type="ChEBI" id="CHEBI:60240"/>
        <note>catalytic</note>
    </ligand>
</feature>
<feature type="binding site" evidence="1 2">
    <location>
        <position position="1059"/>
    </location>
    <ligand>
        <name>a divalent metal cation</name>
        <dbReference type="ChEBI" id="CHEBI:60240"/>
        <note>catalytic</note>
    </ligand>
</feature>
<feature type="mutagenesis site" description="Abolishes nuclease activity." evidence="4">
    <original>E</original>
    <variation>A</variation>
    <location>
        <position position="899"/>
    </location>
</feature>
<feature type="strand" evidence="9">
    <location>
        <begin position="6"/>
        <end position="14"/>
    </location>
</feature>
<feature type="strand" evidence="9">
    <location>
        <begin position="26"/>
        <end position="30"/>
    </location>
</feature>
<feature type="strand" evidence="9">
    <location>
        <begin position="32"/>
        <end position="40"/>
    </location>
</feature>
<feature type="helix" evidence="9">
    <location>
        <begin position="42"/>
        <end position="44"/>
    </location>
</feature>
<feature type="strand" evidence="9">
    <location>
        <begin position="45"/>
        <end position="50"/>
    </location>
</feature>
<feature type="turn" evidence="9">
    <location>
        <begin position="51"/>
        <end position="54"/>
    </location>
</feature>
<feature type="strand" evidence="9">
    <location>
        <begin position="55"/>
        <end position="61"/>
    </location>
</feature>
<feature type="helix" evidence="9">
    <location>
        <begin position="65"/>
        <end position="67"/>
    </location>
</feature>
<feature type="strand" evidence="9">
    <location>
        <begin position="72"/>
        <end position="76"/>
    </location>
</feature>
<feature type="strand" evidence="9">
    <location>
        <begin position="79"/>
        <end position="83"/>
    </location>
</feature>
<feature type="strand" evidence="9">
    <location>
        <begin position="85"/>
        <end position="91"/>
    </location>
</feature>
<feature type="strand" evidence="9">
    <location>
        <begin position="97"/>
        <end position="102"/>
    </location>
</feature>
<feature type="strand" evidence="9">
    <location>
        <begin position="107"/>
        <end position="114"/>
    </location>
</feature>
<feature type="strand" evidence="9">
    <location>
        <begin position="120"/>
        <end position="135"/>
    </location>
</feature>
<feature type="turn" evidence="9">
    <location>
        <begin position="136"/>
        <end position="139"/>
    </location>
</feature>
<feature type="strand" evidence="9">
    <location>
        <begin position="140"/>
        <end position="146"/>
    </location>
</feature>
<feature type="strand" evidence="9">
    <location>
        <begin position="151"/>
        <end position="164"/>
    </location>
</feature>
<feature type="strand" evidence="9">
    <location>
        <begin position="167"/>
        <end position="172"/>
    </location>
</feature>
<feature type="turn" evidence="9">
    <location>
        <begin position="174"/>
        <end position="176"/>
    </location>
</feature>
<feature type="strand" evidence="9">
    <location>
        <begin position="179"/>
        <end position="184"/>
    </location>
</feature>
<feature type="strand" evidence="9">
    <location>
        <begin position="186"/>
        <end position="196"/>
    </location>
</feature>
<feature type="strand" evidence="9">
    <location>
        <begin position="199"/>
        <end position="205"/>
    </location>
</feature>
<feature type="strand" evidence="9">
    <location>
        <begin position="219"/>
        <end position="225"/>
    </location>
</feature>
<feature type="turn" evidence="9">
    <location>
        <begin position="226"/>
        <end position="229"/>
    </location>
</feature>
<feature type="strand" evidence="9">
    <location>
        <begin position="230"/>
        <end position="236"/>
    </location>
</feature>
<feature type="strand" evidence="9">
    <location>
        <begin position="243"/>
        <end position="246"/>
    </location>
</feature>
<feature type="strand" evidence="9">
    <location>
        <begin position="248"/>
        <end position="250"/>
    </location>
</feature>
<feature type="strand" evidence="9">
    <location>
        <begin position="253"/>
        <end position="257"/>
    </location>
</feature>
<feature type="strand" evidence="9">
    <location>
        <begin position="261"/>
        <end position="267"/>
    </location>
</feature>
<feature type="strand" evidence="9">
    <location>
        <begin position="270"/>
        <end position="278"/>
    </location>
</feature>
<feature type="strand" evidence="9">
    <location>
        <begin position="285"/>
        <end position="290"/>
    </location>
</feature>
<feature type="strand" evidence="9">
    <location>
        <begin position="297"/>
        <end position="301"/>
    </location>
</feature>
<feature type="strand" evidence="9">
    <location>
        <begin position="304"/>
        <end position="310"/>
    </location>
</feature>
<feature type="turn" evidence="9">
    <location>
        <begin position="312"/>
        <end position="314"/>
    </location>
</feature>
<feature type="strand" evidence="9">
    <location>
        <begin position="317"/>
        <end position="320"/>
    </location>
</feature>
<feature type="strand" evidence="8">
    <location>
        <begin position="365"/>
        <end position="367"/>
    </location>
</feature>
<feature type="helix" evidence="8">
    <location>
        <begin position="377"/>
        <end position="382"/>
    </location>
</feature>
<feature type="strand" evidence="8">
    <location>
        <begin position="383"/>
        <end position="386"/>
    </location>
</feature>
<feature type="strand" evidence="8">
    <location>
        <begin position="389"/>
        <end position="393"/>
    </location>
</feature>
<gene>
    <name evidence="2" type="primary">PAN2</name>
    <name type="ORF">CTHT_0042640</name>
</gene>
<comment type="function">
    <text evidence="2 4">Catalytic subunit of the poly(A)-nuclease (PAN) deadenylation complex, one of two cytoplasmic mRNA deadenylases involved in mRNA turnover. PAN specifically shortens poly(A) tails of RNA and the activity is stimulated by poly(A)-binding protein PAB1. PAN deadenylation is followed by rapid degradation of the shortened mRNA tails by the CCR4-NOT complex. Deadenylated mRNAs are then degraded by two alternative mechanisms, namely exosome-mediated 3'-5' exonucleolytic degradation, or deadenylation-dependent mRNA decaping and subsequent 5'-3' exonucleolytic degradation by XRN1. May also be involved in post-transcriptional maturation of mRNA poly(A) tails.</text>
</comment>
<comment type="catalytic activity">
    <reaction evidence="2 4">
        <text>Exonucleolytic cleavage of poly(A) to 5'-AMP.</text>
        <dbReference type="EC" id="3.1.13.4"/>
    </reaction>
</comment>
<comment type="cofactor">
    <cofactor evidence="2">
        <name>a divalent metal cation</name>
        <dbReference type="ChEBI" id="CHEBI:60240"/>
    </cofactor>
    <text evidence="2">Binds 2 metal cations per subunit in the catalytic exonuclease domain.</text>
</comment>
<comment type="activity regulation">
    <text evidence="2">Positively regulated by the regulatory subunit PAN3.</text>
</comment>
<comment type="subunit">
    <text evidence="2 4">Forms a heterotrimer with an asymmetric homodimer of the regulatory subunit PAN3 to form the poly(A)-nuclease (PAN) deadenylation complex.</text>
</comment>
<comment type="interaction">
    <interactant intactId="EBI-9836534">
        <id>G0SAK8</id>
    </interactant>
    <interactant intactId="EBI-9836608">
        <id>G0S0Y3</id>
        <label>PAN3</label>
    </interactant>
    <organismsDiffer>false</organismsDiffer>
    <experiments>9</experiments>
</comment>
<comment type="subcellular location">
    <subcellularLocation>
        <location evidence="2">Cytoplasm</location>
    </subcellularLocation>
</comment>
<comment type="domain">
    <text evidence="4">The linker, or PAN3 interaction domain (PID), between the WD40 repeats and the USP domain mediates interaction with PAN3.</text>
</comment>
<comment type="domain">
    <text evidence="2">Contains a pseudo-UCH domain. This ubiquitin C-terminal hydrolase (UCH)-like or ubiquitin specific protease (USP)-like domain is predicted to be catalytically inactive because it lacks the active site catalytic triad characteristic of thiol proteases, with residues at the equivalent structural positions that are incompatible with catalysis, and it cannot bind ubiquitin. It functions as a structural scaffold for intra- and intermolecular interactions in the complex.</text>
</comment>
<comment type="domain">
    <text evidence="2">The linker, or PAN3 interaction domain (PID), between the WD40 repeats and the pseudo-UCH domain mediates interaction with PAN3.</text>
</comment>
<comment type="similarity">
    <text evidence="2">Belongs to the peptidase C19 family. PAN2 subfamily.</text>
</comment>
<name>PAN2_CHATD</name>
<reference key="1">
    <citation type="journal article" date="2011" name="Cell">
        <title>Insight into structure and assembly of the nuclear pore complex by utilizing the genome of a eukaryotic thermophile.</title>
        <authorList>
            <person name="Amlacher S."/>
            <person name="Sarges P."/>
            <person name="Flemming D."/>
            <person name="van Noort V."/>
            <person name="Kunze R."/>
            <person name="Devos D.P."/>
            <person name="Arumugam M."/>
            <person name="Bork P."/>
            <person name="Hurt E."/>
        </authorList>
    </citation>
    <scope>NUCLEOTIDE SEQUENCE [LARGE SCALE GENOMIC DNA]</scope>
    <source>
        <strain>DSM 1495 / CBS 144.50 / IMI 039719</strain>
    </source>
</reference>
<reference evidence="6" key="2">
    <citation type="journal article" date="2014" name="EMBO J.">
        <title>Structural basis for Pan3 binding to Pan2 and its function in mRNA recruitment and deadenylation.</title>
        <authorList>
            <person name="Wolf J."/>
            <person name="Valkov E."/>
            <person name="Allen M.D."/>
            <person name="Meineke B."/>
            <person name="Gordiyenko Y."/>
            <person name="McLaughlin S.H."/>
            <person name="Olsen T.M."/>
            <person name="Robinson C.V."/>
            <person name="Bycroft M."/>
            <person name="Stewart M."/>
            <person name="Passmore L.A."/>
        </authorList>
    </citation>
    <scope>X-RAY CRYSTALLOGRAPHY (2.59 ANGSTROMS) OF 343-458</scope>
    <scope>FUNCTION</scope>
    <scope>CATALYTIC ACTIVITY</scope>
    <scope>SUBUNIT</scope>
    <scope>MUTAGENESIS OF GLU-899</scope>
</reference>
<reference evidence="7" key="3">
    <citation type="journal article" date="2014" name="Nat. Struct. Mol. Biol.">
        <title>An asymmetric PAN3 dimer recruits a single PAN2 exonuclease to mediate mRNA deadenylation and decay.</title>
        <authorList>
            <person name="Jonas S."/>
            <person name="Christie M."/>
            <person name="Peter D."/>
            <person name="Bhandari D."/>
            <person name="Loh B."/>
            <person name="Huntzinger E."/>
            <person name="Weichenrieder O."/>
            <person name="Izaurralde E."/>
        </authorList>
    </citation>
    <scope>X-RAY CRYSTALLOGRAPHY (1.89 ANGSTROMS) OF 1-457</scope>
</reference>
<keyword id="KW-0002">3D-structure</keyword>
<keyword id="KW-0963">Cytoplasm</keyword>
<keyword id="KW-0269">Exonuclease</keyword>
<keyword id="KW-0378">Hydrolase</keyword>
<keyword id="KW-0479">Metal-binding</keyword>
<keyword id="KW-0507">mRNA processing</keyword>
<keyword id="KW-0540">Nuclease</keyword>
<keyword id="KW-1185">Reference proteome</keyword>
<keyword id="KW-0677">Repeat</keyword>
<keyword id="KW-0853">WD repeat</keyword>
<organism>
    <name type="scientific">Chaetomium thermophilum (strain DSM 1495 / CBS 144.50 / IMI 039719)</name>
    <name type="common">Thermochaetoides thermophila</name>
    <dbReference type="NCBI Taxonomy" id="759272"/>
    <lineage>
        <taxon>Eukaryota</taxon>
        <taxon>Fungi</taxon>
        <taxon>Dikarya</taxon>
        <taxon>Ascomycota</taxon>
        <taxon>Pezizomycotina</taxon>
        <taxon>Sordariomycetes</taxon>
        <taxon>Sordariomycetidae</taxon>
        <taxon>Sordariales</taxon>
        <taxon>Chaetomiaceae</taxon>
        <taxon>Thermochaetoides</taxon>
    </lineage>
</organism>
<dbReference type="EC" id="3.1.13.4" evidence="2"/>
<dbReference type="EMBL" id="GL988043">
    <property type="protein sequence ID" value="EGS19780.1"/>
    <property type="molecule type" value="Genomic_DNA"/>
</dbReference>
<dbReference type="RefSeq" id="XP_006694665.1">
    <property type="nucleotide sequence ID" value="XM_006694602.1"/>
</dbReference>
<dbReference type="PDB" id="4CYJ">
    <property type="method" value="X-ray"/>
    <property type="resolution" value="2.59 A"/>
    <property type="chains" value="E/F=343-458"/>
</dbReference>
<dbReference type="PDB" id="4D0K">
    <property type="method" value="X-ray"/>
    <property type="resolution" value="1.89 A"/>
    <property type="chains" value="A=1-457"/>
</dbReference>
<dbReference type="PDBsum" id="4CYJ"/>
<dbReference type="PDBsum" id="4D0K"/>
<dbReference type="SMR" id="G0SAK8"/>
<dbReference type="DIP" id="DIP-61541N"/>
<dbReference type="IntAct" id="G0SAK8">
    <property type="interactions" value="1"/>
</dbReference>
<dbReference type="MINT" id="G0SAK8"/>
<dbReference type="STRING" id="759272.G0SAK8"/>
<dbReference type="GeneID" id="18258302"/>
<dbReference type="KEGG" id="cthr:CTHT_0042640"/>
<dbReference type="eggNOG" id="KOG1275">
    <property type="taxonomic scope" value="Eukaryota"/>
</dbReference>
<dbReference type="HOGENOM" id="CLU_002369_1_0_1"/>
<dbReference type="OMA" id="TQELLWT"/>
<dbReference type="OrthoDB" id="16516at2759"/>
<dbReference type="EvolutionaryTrace" id="G0SAK8"/>
<dbReference type="Proteomes" id="UP000008066">
    <property type="component" value="Unassembled WGS sequence"/>
</dbReference>
<dbReference type="GO" id="GO:0000932">
    <property type="term" value="C:P-body"/>
    <property type="evidence" value="ECO:0007669"/>
    <property type="project" value="TreeGrafter"/>
</dbReference>
<dbReference type="GO" id="GO:0031251">
    <property type="term" value="C:PAN complex"/>
    <property type="evidence" value="ECO:0007669"/>
    <property type="project" value="UniProtKB-UniRule"/>
</dbReference>
<dbReference type="GO" id="GO:0046872">
    <property type="term" value="F:metal ion binding"/>
    <property type="evidence" value="ECO:0007669"/>
    <property type="project" value="UniProtKB-KW"/>
</dbReference>
<dbReference type="GO" id="GO:0003676">
    <property type="term" value="F:nucleic acid binding"/>
    <property type="evidence" value="ECO:0007669"/>
    <property type="project" value="InterPro"/>
</dbReference>
<dbReference type="GO" id="GO:0004535">
    <property type="term" value="F:poly(A)-specific ribonuclease activity"/>
    <property type="evidence" value="ECO:0007669"/>
    <property type="project" value="UniProtKB-UniRule"/>
</dbReference>
<dbReference type="GO" id="GO:0006397">
    <property type="term" value="P:mRNA processing"/>
    <property type="evidence" value="ECO:0007669"/>
    <property type="project" value="UniProtKB-KW"/>
</dbReference>
<dbReference type="GO" id="GO:0000289">
    <property type="term" value="P:nuclear-transcribed mRNA poly(A) tail shortening"/>
    <property type="evidence" value="ECO:0007669"/>
    <property type="project" value="UniProtKB-UniRule"/>
</dbReference>
<dbReference type="CDD" id="cd06143">
    <property type="entry name" value="PAN2_exo"/>
    <property type="match status" value="1"/>
</dbReference>
<dbReference type="CDD" id="cd02672">
    <property type="entry name" value="Peptidase_C19P"/>
    <property type="match status" value="1"/>
</dbReference>
<dbReference type="FunFam" id="2.130.10.10:FF:000459">
    <property type="entry name" value="PAN2-PAN3 deadenylation complex catalytic subunit PAN2"/>
    <property type="match status" value="1"/>
</dbReference>
<dbReference type="FunFam" id="3.30.420.10:FF:000028">
    <property type="entry name" value="PAN2-PAN3 deadenylation complex catalytic subunit PAN2"/>
    <property type="match status" value="1"/>
</dbReference>
<dbReference type="Gene3D" id="3.90.70.10">
    <property type="entry name" value="Cysteine proteinases"/>
    <property type="match status" value="1"/>
</dbReference>
<dbReference type="Gene3D" id="3.30.420.10">
    <property type="entry name" value="Ribonuclease H-like superfamily/Ribonuclease H"/>
    <property type="match status" value="1"/>
</dbReference>
<dbReference type="Gene3D" id="2.130.10.10">
    <property type="entry name" value="YVTN repeat-like/Quinoprotein amine dehydrogenase"/>
    <property type="match status" value="1"/>
</dbReference>
<dbReference type="HAMAP" id="MF_03182">
    <property type="entry name" value="PAN2"/>
    <property type="match status" value="1"/>
</dbReference>
<dbReference type="InterPro" id="IPR013520">
    <property type="entry name" value="Exonuclease_RNaseT/DNA_pol3"/>
</dbReference>
<dbReference type="InterPro" id="IPR030843">
    <property type="entry name" value="PAN2"/>
</dbReference>
<dbReference type="InterPro" id="IPR050785">
    <property type="entry name" value="PAN2-PAN3_catalytic_subunit"/>
</dbReference>
<dbReference type="InterPro" id="IPR048841">
    <property type="entry name" value="PAN2_N"/>
</dbReference>
<dbReference type="InterPro" id="IPR028881">
    <property type="entry name" value="PAN2_UCH_dom"/>
</dbReference>
<dbReference type="InterPro" id="IPR038765">
    <property type="entry name" value="Papain-like_cys_pep_sf"/>
</dbReference>
<dbReference type="InterPro" id="IPR012337">
    <property type="entry name" value="RNaseH-like_sf"/>
</dbReference>
<dbReference type="InterPro" id="IPR036397">
    <property type="entry name" value="RNaseH_sf"/>
</dbReference>
<dbReference type="InterPro" id="IPR028889">
    <property type="entry name" value="USP_dom"/>
</dbReference>
<dbReference type="InterPro" id="IPR015943">
    <property type="entry name" value="WD40/YVTN_repeat-like_dom_sf"/>
</dbReference>
<dbReference type="InterPro" id="IPR036322">
    <property type="entry name" value="WD40_repeat_dom_sf"/>
</dbReference>
<dbReference type="PANTHER" id="PTHR15728">
    <property type="entry name" value="DEADENYLATION COMPLEX CATALYTIC SUBUNIT PAN2"/>
    <property type="match status" value="1"/>
</dbReference>
<dbReference type="PANTHER" id="PTHR15728:SF0">
    <property type="entry name" value="PAN2-PAN3 DEADENYLATION COMPLEX CATALYTIC SUBUNIT PAN2"/>
    <property type="match status" value="1"/>
</dbReference>
<dbReference type="Pfam" id="PF20770">
    <property type="entry name" value="PAN2_N"/>
    <property type="match status" value="1"/>
</dbReference>
<dbReference type="Pfam" id="PF00929">
    <property type="entry name" value="RNase_T"/>
    <property type="match status" value="1"/>
</dbReference>
<dbReference type="Pfam" id="PF13423">
    <property type="entry name" value="UCH_1"/>
    <property type="match status" value="1"/>
</dbReference>
<dbReference type="SMART" id="SM00479">
    <property type="entry name" value="EXOIII"/>
    <property type="match status" value="1"/>
</dbReference>
<dbReference type="SUPFAM" id="SSF54001">
    <property type="entry name" value="Cysteine proteinases"/>
    <property type="match status" value="1"/>
</dbReference>
<dbReference type="SUPFAM" id="SSF53098">
    <property type="entry name" value="Ribonuclease H-like"/>
    <property type="match status" value="1"/>
</dbReference>
<dbReference type="SUPFAM" id="SSF50978">
    <property type="entry name" value="WD40 repeat-like"/>
    <property type="match status" value="1"/>
</dbReference>
<dbReference type="PROSITE" id="PS50235">
    <property type="entry name" value="USP_3"/>
    <property type="match status" value="1"/>
</dbReference>
<accession>G0SAK8</accession>
<sequence length="1170" mass="130569">MDADWDEVTRIAYPAPGTNDFPRPATAVAFDPIAELLWAGFDRGRVCSFYGRDLTRYTAFKIQPASEGPVRQFLFHDKGVIVLGTRSVHMAMRRGPALWNIRHENMKDLRCMSFTSKGTQEIIVAGWQDTMLVIDVLKGDIIKQIPAQHHYSIMKKSRYICAATKTGSVDLIDPLSFKIVRSWQAHASYINDMDAQNDFIVTCGGSLKQQAAQTYMLDPYVNVFDLKNMASMKPMPFPPLAAHVRLHPRMLTTAIVTSQHGQMHVVDIMNPNSSTVRYANISSYVKLFEIAPSGEALVIGDADCNIHLWGSPTKIHFTDMAIPIELPEPEEPAPVLDWSIETPLSSIGLPYYREPLFSAWPADIISDVGAPPLQLEPSFVATLKQAEWGLYGKNTRNVRRNQVEDTRNTNKQSNALQAPKFLSERARESALSSGGDSSSDPQVDQEPEDPNEIESLKPEAPPLYRNLEIKYSKFGVDDFDFGYYNKTRYAGLENHIPNSYANSLLQLMHYTPLLRNMALQHAATACVSDLCLLCELGFVFDMLQKAEGATCQATNMFKALSGTPQAAPLGLLEEETHVPSLATMAQNLSRFLLEKIHNEYRTIPPISTALEQSLFNFPHPPTPDELVAKVLATSAVATIKCMNCRSETTRPGTTHVIDLLYPPPKTAGRGGRASKVTFSQVLKMGVERETTSKGWCSRCQRYQNLQMRKTIHSVPAVLVVNAGVSNQEHRKLWSTPGWLPEEIGIIVDQGQFFCFEGEDLKLHLQRGIHNITVYSLIGMVINIESHSPQKSHLVGIINVAHAEATPPGENKWHLFNDFSVRPVSAAEALTFNAAWKMPAVLLFQIKSANNKSNLDWKTNLDTSILYKDTNPNTEKKTYRTLDQERERPGPDTIVALDTEFVSLKQPEIQMNSDGERETIRPMSHALARVSVVRGQGENEGSAFIDDYIAIREPVVDYLTLYSGITASDLDPRTSKHNLVSLKTAYKKLWVLLNLGCKFLGHGLKQDFRVINIQVPRAQVIDTIEVFYLKSRLRKLSLAFLAWYLLKEDIQLETHDSIEDARTALKLYRKYLEFDDAGILEAMLEDIYKAGRATNFKPPRREDREKELQRQSTPPNSTAPNDCGAKPDGNGNENGGEPATPARKTGGITAPTFGAVNVFGTPSKASSPLPK</sequence>